<sequence>MPLKPFAPSEPYTLGVELELQVVSPPGFNLSQDSSTLISALESRVTAGEVKHDITESMLEIATGVCRDINQVAAEFAAMQREILACAQQYHLMISGGGTHPFQKWQRQEVCSSERYARTLELFGYLIKQATVFGQHVHVGCRNGEEAMYLLHGLSRFVPHFVALSASSPYMQGADTGFASSRLNIFSAFPDNGPAPFAADWTQFEKMYARLEGTKVVESIKDLHWDIRPSPGFGTVEVRVMDTPLTLERAINIAGFIQAISHWLLDERPYKHKAEDYLIYRFNRFQACRYGLEGTLTDVSTGEQRTIGEDILRLLDKLERYARPLNASSALEAIHRYVKNNDSDVHRIREFTADGGSLSELVRLNGEIWAA</sequence>
<gene>
    <name type="ordered locus">ESA_02733</name>
</gene>
<name>GCS2_CROS8</name>
<comment type="function">
    <text evidence="1">ATP-dependent carboxylate-amine ligase which exhibits weak glutamate--cysteine ligase activity.</text>
</comment>
<comment type="catalytic activity">
    <reaction evidence="1">
        <text>L-cysteine + L-glutamate + ATP = gamma-L-glutamyl-L-cysteine + ADP + phosphate + H(+)</text>
        <dbReference type="Rhea" id="RHEA:13285"/>
        <dbReference type="ChEBI" id="CHEBI:15378"/>
        <dbReference type="ChEBI" id="CHEBI:29985"/>
        <dbReference type="ChEBI" id="CHEBI:30616"/>
        <dbReference type="ChEBI" id="CHEBI:35235"/>
        <dbReference type="ChEBI" id="CHEBI:43474"/>
        <dbReference type="ChEBI" id="CHEBI:58173"/>
        <dbReference type="ChEBI" id="CHEBI:456216"/>
        <dbReference type="EC" id="6.3.2.2"/>
    </reaction>
</comment>
<comment type="subunit">
    <text evidence="1">Homodimer.</text>
</comment>
<comment type="similarity">
    <text evidence="1">Belongs to the glutamate--cysteine ligase type 2 family. YbdK subfamily.</text>
</comment>
<reference key="1">
    <citation type="journal article" date="2010" name="PLoS ONE">
        <title>Genome sequence of Cronobacter sakazakii BAA-894 and comparative genomic hybridization analysis with other Cronobacter species.</title>
        <authorList>
            <person name="Kucerova E."/>
            <person name="Clifton S.W."/>
            <person name="Xia X.Q."/>
            <person name="Long F."/>
            <person name="Porwollik S."/>
            <person name="Fulton L."/>
            <person name="Fronick C."/>
            <person name="Minx P."/>
            <person name="Kyung K."/>
            <person name="Warren W."/>
            <person name="Fulton R."/>
            <person name="Feng D."/>
            <person name="Wollam A."/>
            <person name="Shah N."/>
            <person name="Bhonagiri V."/>
            <person name="Nash W.E."/>
            <person name="Hallsworth-Pepin K."/>
            <person name="Wilson R.K."/>
            <person name="McClelland M."/>
            <person name="Forsythe S.J."/>
        </authorList>
    </citation>
    <scope>NUCLEOTIDE SEQUENCE [LARGE SCALE GENOMIC DNA]</scope>
    <source>
        <strain>ATCC BAA-894</strain>
    </source>
</reference>
<protein>
    <recommendedName>
        <fullName evidence="1">Putative glutamate--cysteine ligase 2</fullName>
        <ecNumber evidence="1">6.3.2.2</ecNumber>
    </recommendedName>
    <alternativeName>
        <fullName evidence="1">Gamma-glutamylcysteine synthetase 2</fullName>
        <shortName evidence="1">GCS 2</shortName>
        <shortName evidence="1">Gamma-GCS 2</shortName>
    </alternativeName>
</protein>
<organism>
    <name type="scientific">Cronobacter sakazakii (strain ATCC BAA-894)</name>
    <name type="common">Enterobacter sakazakii</name>
    <dbReference type="NCBI Taxonomy" id="290339"/>
    <lineage>
        <taxon>Bacteria</taxon>
        <taxon>Pseudomonadati</taxon>
        <taxon>Pseudomonadota</taxon>
        <taxon>Gammaproteobacteria</taxon>
        <taxon>Enterobacterales</taxon>
        <taxon>Enterobacteriaceae</taxon>
        <taxon>Cronobacter</taxon>
    </lineage>
</organism>
<dbReference type="EC" id="6.3.2.2" evidence="1"/>
<dbReference type="EMBL" id="CP000783">
    <property type="protein sequence ID" value="ABU77965.1"/>
    <property type="molecule type" value="Genomic_DNA"/>
</dbReference>
<dbReference type="RefSeq" id="WP_012125397.1">
    <property type="nucleotide sequence ID" value="NC_009778.1"/>
</dbReference>
<dbReference type="SMR" id="A7MNP0"/>
<dbReference type="KEGG" id="esa:ESA_02733"/>
<dbReference type="PATRIC" id="fig|290339.8.peg.2432"/>
<dbReference type="HOGENOM" id="CLU_044848_1_1_6"/>
<dbReference type="Proteomes" id="UP000000260">
    <property type="component" value="Chromosome"/>
</dbReference>
<dbReference type="GO" id="GO:0005524">
    <property type="term" value="F:ATP binding"/>
    <property type="evidence" value="ECO:0007669"/>
    <property type="project" value="UniProtKB-KW"/>
</dbReference>
<dbReference type="GO" id="GO:0004357">
    <property type="term" value="F:glutamate-cysteine ligase activity"/>
    <property type="evidence" value="ECO:0007669"/>
    <property type="project" value="UniProtKB-EC"/>
</dbReference>
<dbReference type="GO" id="GO:0042398">
    <property type="term" value="P:modified amino acid biosynthetic process"/>
    <property type="evidence" value="ECO:0007669"/>
    <property type="project" value="InterPro"/>
</dbReference>
<dbReference type="Gene3D" id="3.30.590.20">
    <property type="match status" value="1"/>
</dbReference>
<dbReference type="HAMAP" id="MF_01609">
    <property type="entry name" value="Glu_cys_ligase_2"/>
    <property type="match status" value="1"/>
</dbReference>
<dbReference type="InterPro" id="IPR050141">
    <property type="entry name" value="GCL_type2/YbdK_subfam"/>
</dbReference>
<dbReference type="InterPro" id="IPR006336">
    <property type="entry name" value="GCS2"/>
</dbReference>
<dbReference type="InterPro" id="IPR014746">
    <property type="entry name" value="Gln_synth/guanido_kin_cat_dom"/>
</dbReference>
<dbReference type="InterPro" id="IPR011793">
    <property type="entry name" value="YbdK"/>
</dbReference>
<dbReference type="NCBIfam" id="TIGR02050">
    <property type="entry name" value="gshA_cyan_rel"/>
    <property type="match status" value="1"/>
</dbReference>
<dbReference type="NCBIfam" id="NF010040">
    <property type="entry name" value="PRK13516.1"/>
    <property type="match status" value="1"/>
</dbReference>
<dbReference type="PANTHER" id="PTHR36510">
    <property type="entry name" value="GLUTAMATE--CYSTEINE LIGASE 2-RELATED"/>
    <property type="match status" value="1"/>
</dbReference>
<dbReference type="PANTHER" id="PTHR36510:SF1">
    <property type="entry name" value="GLUTAMATE--CYSTEINE LIGASE 2-RELATED"/>
    <property type="match status" value="1"/>
</dbReference>
<dbReference type="Pfam" id="PF04107">
    <property type="entry name" value="GCS2"/>
    <property type="match status" value="1"/>
</dbReference>
<dbReference type="SUPFAM" id="SSF55931">
    <property type="entry name" value="Glutamine synthetase/guanido kinase"/>
    <property type="match status" value="1"/>
</dbReference>
<accession>A7MNP0</accession>
<feature type="chain" id="PRO_1000069437" description="Putative glutamate--cysteine ligase 2">
    <location>
        <begin position="1"/>
        <end position="371"/>
    </location>
</feature>
<evidence type="ECO:0000255" key="1">
    <source>
        <dbReference type="HAMAP-Rule" id="MF_01609"/>
    </source>
</evidence>
<keyword id="KW-0067">ATP-binding</keyword>
<keyword id="KW-0436">Ligase</keyword>
<keyword id="KW-0547">Nucleotide-binding</keyword>
<keyword id="KW-1185">Reference proteome</keyword>
<proteinExistence type="inferred from homology"/>